<sequence>MHALQAKILDPRIGTEFPLPQYATPGSAGLDLRAMLQEDIVIKPGETVLIPTGLSVYIGDPNLAALILPRSGMGHKHGIVLGNLVGLIDSDYQGPLMVSCWNRGQTEFTMPVGERLAQLVLVPVVQAHFEMVEEFVETERGTGGFGHSGTK</sequence>
<accession>Q3K4M6</accession>
<keyword id="KW-0378">Hydrolase</keyword>
<keyword id="KW-0460">Magnesium</keyword>
<keyword id="KW-0479">Metal-binding</keyword>
<keyword id="KW-0546">Nucleotide metabolism</keyword>
<gene>
    <name evidence="1" type="primary">dut</name>
    <name type="ordered locus">Pfl01_5541</name>
</gene>
<dbReference type="EC" id="3.6.1.23" evidence="1"/>
<dbReference type="EMBL" id="CP000094">
    <property type="protein sequence ID" value="ABA77278.1"/>
    <property type="molecule type" value="Genomic_DNA"/>
</dbReference>
<dbReference type="RefSeq" id="WP_011336556.1">
    <property type="nucleotide sequence ID" value="NC_007492.2"/>
</dbReference>
<dbReference type="SMR" id="Q3K4M6"/>
<dbReference type="KEGG" id="pfo:Pfl01_5541"/>
<dbReference type="eggNOG" id="COG0756">
    <property type="taxonomic scope" value="Bacteria"/>
</dbReference>
<dbReference type="HOGENOM" id="CLU_068508_1_1_6"/>
<dbReference type="UniPathway" id="UPA00610">
    <property type="reaction ID" value="UER00666"/>
</dbReference>
<dbReference type="Proteomes" id="UP000002704">
    <property type="component" value="Chromosome"/>
</dbReference>
<dbReference type="GO" id="GO:0004170">
    <property type="term" value="F:dUTP diphosphatase activity"/>
    <property type="evidence" value="ECO:0007669"/>
    <property type="project" value="UniProtKB-UniRule"/>
</dbReference>
<dbReference type="GO" id="GO:0000287">
    <property type="term" value="F:magnesium ion binding"/>
    <property type="evidence" value="ECO:0007669"/>
    <property type="project" value="UniProtKB-UniRule"/>
</dbReference>
<dbReference type="GO" id="GO:0006226">
    <property type="term" value="P:dUMP biosynthetic process"/>
    <property type="evidence" value="ECO:0007669"/>
    <property type="project" value="UniProtKB-UniRule"/>
</dbReference>
<dbReference type="GO" id="GO:0046081">
    <property type="term" value="P:dUTP catabolic process"/>
    <property type="evidence" value="ECO:0007669"/>
    <property type="project" value="InterPro"/>
</dbReference>
<dbReference type="CDD" id="cd07557">
    <property type="entry name" value="trimeric_dUTPase"/>
    <property type="match status" value="1"/>
</dbReference>
<dbReference type="FunFam" id="2.70.40.10:FF:000002">
    <property type="entry name" value="dUTP diphosphatase"/>
    <property type="match status" value="1"/>
</dbReference>
<dbReference type="Gene3D" id="2.70.40.10">
    <property type="match status" value="1"/>
</dbReference>
<dbReference type="HAMAP" id="MF_00116">
    <property type="entry name" value="dUTPase_bact"/>
    <property type="match status" value="1"/>
</dbReference>
<dbReference type="InterPro" id="IPR008181">
    <property type="entry name" value="dUTPase"/>
</dbReference>
<dbReference type="InterPro" id="IPR029054">
    <property type="entry name" value="dUTPase-like"/>
</dbReference>
<dbReference type="InterPro" id="IPR036157">
    <property type="entry name" value="dUTPase-like_sf"/>
</dbReference>
<dbReference type="InterPro" id="IPR033704">
    <property type="entry name" value="dUTPase_trimeric"/>
</dbReference>
<dbReference type="NCBIfam" id="TIGR00576">
    <property type="entry name" value="dut"/>
    <property type="match status" value="1"/>
</dbReference>
<dbReference type="NCBIfam" id="NF001862">
    <property type="entry name" value="PRK00601.1"/>
    <property type="match status" value="1"/>
</dbReference>
<dbReference type="PANTHER" id="PTHR11241">
    <property type="entry name" value="DEOXYURIDINE 5'-TRIPHOSPHATE NUCLEOTIDOHYDROLASE"/>
    <property type="match status" value="1"/>
</dbReference>
<dbReference type="PANTHER" id="PTHR11241:SF0">
    <property type="entry name" value="DEOXYURIDINE 5'-TRIPHOSPHATE NUCLEOTIDOHYDROLASE"/>
    <property type="match status" value="1"/>
</dbReference>
<dbReference type="Pfam" id="PF00692">
    <property type="entry name" value="dUTPase"/>
    <property type="match status" value="1"/>
</dbReference>
<dbReference type="SUPFAM" id="SSF51283">
    <property type="entry name" value="dUTPase-like"/>
    <property type="match status" value="1"/>
</dbReference>
<feature type="chain" id="PRO_0000231420" description="Deoxyuridine 5'-triphosphate nucleotidohydrolase">
    <location>
        <begin position="1"/>
        <end position="151"/>
    </location>
</feature>
<feature type="binding site" evidence="1">
    <location>
        <begin position="70"/>
        <end position="72"/>
    </location>
    <ligand>
        <name>substrate</name>
    </ligand>
</feature>
<feature type="binding site" evidence="1">
    <location>
        <position position="83"/>
    </location>
    <ligand>
        <name>substrate</name>
    </ligand>
</feature>
<feature type="binding site" evidence="1">
    <location>
        <begin position="87"/>
        <end position="89"/>
    </location>
    <ligand>
        <name>substrate</name>
    </ligand>
</feature>
<feature type="binding site" evidence="1">
    <location>
        <position position="97"/>
    </location>
    <ligand>
        <name>substrate</name>
    </ligand>
</feature>
<comment type="function">
    <text evidence="1">This enzyme is involved in nucleotide metabolism: it produces dUMP, the immediate precursor of thymidine nucleotides and it decreases the intracellular concentration of dUTP so that uracil cannot be incorporated into DNA.</text>
</comment>
<comment type="catalytic activity">
    <reaction evidence="1">
        <text>dUTP + H2O = dUMP + diphosphate + H(+)</text>
        <dbReference type="Rhea" id="RHEA:10248"/>
        <dbReference type="ChEBI" id="CHEBI:15377"/>
        <dbReference type="ChEBI" id="CHEBI:15378"/>
        <dbReference type="ChEBI" id="CHEBI:33019"/>
        <dbReference type="ChEBI" id="CHEBI:61555"/>
        <dbReference type="ChEBI" id="CHEBI:246422"/>
        <dbReference type="EC" id="3.6.1.23"/>
    </reaction>
</comment>
<comment type="cofactor">
    <cofactor evidence="1">
        <name>Mg(2+)</name>
        <dbReference type="ChEBI" id="CHEBI:18420"/>
    </cofactor>
</comment>
<comment type="pathway">
    <text evidence="1">Pyrimidine metabolism; dUMP biosynthesis; dUMP from dCTP (dUTP route): step 2/2.</text>
</comment>
<comment type="similarity">
    <text evidence="1">Belongs to the dUTPase family.</text>
</comment>
<evidence type="ECO:0000255" key="1">
    <source>
        <dbReference type="HAMAP-Rule" id="MF_00116"/>
    </source>
</evidence>
<proteinExistence type="inferred from homology"/>
<reference key="1">
    <citation type="journal article" date="2009" name="Genome Biol.">
        <title>Genomic and genetic analyses of diversity and plant interactions of Pseudomonas fluorescens.</title>
        <authorList>
            <person name="Silby M.W."/>
            <person name="Cerdeno-Tarraga A.M."/>
            <person name="Vernikos G.S."/>
            <person name="Giddens S.R."/>
            <person name="Jackson R.W."/>
            <person name="Preston G.M."/>
            <person name="Zhang X.-X."/>
            <person name="Moon C.D."/>
            <person name="Gehrig S.M."/>
            <person name="Godfrey S.A.C."/>
            <person name="Knight C.G."/>
            <person name="Malone J.G."/>
            <person name="Robinson Z."/>
            <person name="Spiers A.J."/>
            <person name="Harris S."/>
            <person name="Challis G.L."/>
            <person name="Yaxley A.M."/>
            <person name="Harris D."/>
            <person name="Seeger K."/>
            <person name="Murphy L."/>
            <person name="Rutter S."/>
            <person name="Squares R."/>
            <person name="Quail M.A."/>
            <person name="Saunders E."/>
            <person name="Mavromatis K."/>
            <person name="Brettin T.S."/>
            <person name="Bentley S.D."/>
            <person name="Hothersall J."/>
            <person name="Stephens E."/>
            <person name="Thomas C.M."/>
            <person name="Parkhill J."/>
            <person name="Levy S.B."/>
            <person name="Rainey P.B."/>
            <person name="Thomson N.R."/>
        </authorList>
    </citation>
    <scope>NUCLEOTIDE SEQUENCE [LARGE SCALE GENOMIC DNA]</scope>
    <source>
        <strain>Pf0-1</strain>
    </source>
</reference>
<organism>
    <name type="scientific">Pseudomonas fluorescens (strain Pf0-1)</name>
    <dbReference type="NCBI Taxonomy" id="205922"/>
    <lineage>
        <taxon>Bacteria</taxon>
        <taxon>Pseudomonadati</taxon>
        <taxon>Pseudomonadota</taxon>
        <taxon>Gammaproteobacteria</taxon>
        <taxon>Pseudomonadales</taxon>
        <taxon>Pseudomonadaceae</taxon>
        <taxon>Pseudomonas</taxon>
    </lineage>
</organism>
<name>DUT_PSEPF</name>
<protein>
    <recommendedName>
        <fullName evidence="1">Deoxyuridine 5'-triphosphate nucleotidohydrolase</fullName>
        <shortName evidence="1">dUTPase</shortName>
        <ecNumber evidence="1">3.6.1.23</ecNumber>
    </recommendedName>
    <alternativeName>
        <fullName evidence="1">dUTP pyrophosphatase</fullName>
    </alternativeName>
</protein>